<evidence type="ECO:0000250" key="1"/>
<evidence type="ECO:0000250" key="2">
    <source>
        <dbReference type="UniProtKB" id="P00516"/>
    </source>
</evidence>
<evidence type="ECO:0000250" key="3">
    <source>
        <dbReference type="UniProtKB" id="Q13976"/>
    </source>
</evidence>
<evidence type="ECO:0000255" key="4">
    <source>
        <dbReference type="PROSITE-ProRule" id="PRU00159"/>
    </source>
</evidence>
<evidence type="ECO:0000255" key="5">
    <source>
        <dbReference type="PROSITE-ProRule" id="PRU00618"/>
    </source>
</evidence>
<evidence type="ECO:0000255" key="6">
    <source>
        <dbReference type="PROSITE-ProRule" id="PRU10027"/>
    </source>
</evidence>
<evidence type="ECO:0000256" key="7">
    <source>
        <dbReference type="SAM" id="MobiDB-lite"/>
    </source>
</evidence>
<evidence type="ECO:0000269" key="8">
    <source>
    </source>
</evidence>
<evidence type="ECO:0000269" key="9">
    <source>
    </source>
</evidence>
<evidence type="ECO:0000269" key="10">
    <source>
    </source>
</evidence>
<evidence type="ECO:0000269" key="11">
    <source>
    </source>
</evidence>
<evidence type="ECO:0000269" key="12">
    <source>
    </source>
</evidence>
<evidence type="ECO:0000269" key="13">
    <source>
    </source>
</evidence>
<evidence type="ECO:0000303" key="14">
    <source>
    </source>
</evidence>
<evidence type="ECO:0000303" key="15">
    <source>
    </source>
</evidence>
<evidence type="ECO:0000305" key="16"/>
<evidence type="ECO:0007744" key="17">
    <source>
    </source>
</evidence>
<proteinExistence type="evidence at protein level"/>
<accession>P0C605</accession>
<accession>Q14DK6</accession>
<accession>Q9Z0Z0</accession>
<sequence>MSELEEDFAKILMLKEERIKELEKRLSEKEEEIQELKRKLHKCQSVLPVPSTHIGPRTTRAQGISAEPQTYRSFHDLRQAFRKFTKSERSKDLIKEAILDNDFMKNLELSQIQEIVDCMYPVEYGKDSCIIKEGDVGSLVYVMEDGKVEVTKEGVKLCTMGPGKVFGELAILYNCTRTATVKTLVNVKLWAIDRQCFQTIMMRTGLIKHTEYMEFLKSVPTFQSLPDEILSKLADVLEETHYENGEYIIRQGARGDTFFIISKGQVNVTREDSPSEDPVFLRTLGKGDWFGEKALQGEDVRTANVIAAEAVTCLVIDRDSFKHLIGGLDDVSNKAYEDAEAKAKYEAEAAFFANLKLSDFNIIDTLGVGGFGRVELVQLKSEESKTFAMKILKKRHIVDTRQQEHIRSEKQIMQGAHSDFIVRLYRTFKDSKYLYMLMEACLGGELWTILRDRGSFEDSTTRFYTACVVEAFAYLHSKGIIYRDLKPENLILDHRGYAKLVDFGFAKKIGFGKKTWTFCGTPEYVAPEIILNKGHDISADYWSLGILMYELLTGSPPFSGPDPMKTYNIILRGIDMIEFPKKIAKNAANLIKKLCRDNPSERLGNLKNGVKDIQKHKWFEGFNWEGLRKGTLTPPIIPSVASPTDTSNFDSFPEDSDEPPPDDNSGWDIDF</sequence>
<comment type="function">
    <text evidence="8 9 11 12 13">Serine/threonine protein kinase that acts as a key mediator of the nitric oxide (NO)/cGMP signaling pathway. GMP binding activates PRKG1, which phosphorylates serines and threonines on many cellular proteins. Numerous protein targets for PRKG1 phosphorylation are implicated in modulating cellular calcium, but the contribution of each of these targets may vary substantially among cell types. Proteins that are phosphorylated by PRKG1 regulate platelet activation and adhesion, smooth muscle contraction, cardiac function, gene expression, feedback of the NO-signaling pathway, and other processes involved in several aspects of the CNS like axon guidance, hippocampal and cerebellar learning, circadian rhythm and nociception. Smooth muscle relaxation is mediated through lowering of intracellular free calcium, by desensitization of contractile proteins to calcium, and by decrease in the contractile state of smooth muscle or in platelet activation. Regulates intracellular calcium levels via several pathways: phosphorylates IRAG1 and inhibits IP3-induced Ca(2+) release from intracellular stores, phosphorylation of KCNMA1 (BKCa) channels decreases intracellular Ca(2+) levels, which leads to increased opening of this channel. PRKG1 phosphorylates the canonical transient receptor potential channel (TRPC) family which inactivates the associated inward calcium current. Another mode of action of NO/cGMP/PKGI signaling involves PKGI-mediated inactivation of the Ras homolog gene family member A (RhoA). Phosphorylation of RHOA by PRKG1 blocks the action of this protein in myriad processes: regulation of RHOA translocation; decreasing contraction; controlling vesicle trafficking, reduction of myosin light chain phosphorylation resulting in vasorelaxation. Activation of PRKG1 by NO signaling also alters gene expression in a number of tissues. In smooth muscle cells, increased cGMP and PRKG1 activity influence expression of smooth muscle-specific contractile proteins, levels of proteins in the NO/cGMP signaling pathway, down-regulation of the matrix proteins osteopontin and thrombospondin-1 to limit smooth muscle cell migration and phenotype. Regulates vasodilator-stimulated phosphoprotein (VASP) functions in platelets and smooth muscle.</text>
</comment>
<comment type="catalytic activity">
    <reaction>
        <text>L-seryl-[protein] + ATP = O-phospho-L-seryl-[protein] + ADP + H(+)</text>
        <dbReference type="Rhea" id="RHEA:17989"/>
        <dbReference type="Rhea" id="RHEA-COMP:9863"/>
        <dbReference type="Rhea" id="RHEA-COMP:11604"/>
        <dbReference type="ChEBI" id="CHEBI:15378"/>
        <dbReference type="ChEBI" id="CHEBI:29999"/>
        <dbReference type="ChEBI" id="CHEBI:30616"/>
        <dbReference type="ChEBI" id="CHEBI:83421"/>
        <dbReference type="ChEBI" id="CHEBI:456216"/>
        <dbReference type="EC" id="2.7.11.12"/>
    </reaction>
</comment>
<comment type="catalytic activity">
    <reaction>
        <text>L-threonyl-[protein] + ATP = O-phospho-L-threonyl-[protein] + ADP + H(+)</text>
        <dbReference type="Rhea" id="RHEA:46608"/>
        <dbReference type="Rhea" id="RHEA-COMP:11060"/>
        <dbReference type="Rhea" id="RHEA-COMP:11605"/>
        <dbReference type="ChEBI" id="CHEBI:15378"/>
        <dbReference type="ChEBI" id="CHEBI:30013"/>
        <dbReference type="ChEBI" id="CHEBI:30616"/>
        <dbReference type="ChEBI" id="CHEBI:61977"/>
        <dbReference type="ChEBI" id="CHEBI:456216"/>
        <dbReference type="EC" id="2.7.11.12"/>
    </reaction>
</comment>
<comment type="activity regulation">
    <text evidence="1">In the absence of cGMP, PRKG1 activity is suppressed by autoinhibitory contacts.</text>
</comment>
<comment type="subunit">
    <text evidence="1">Isoform alpha: parallel homodimer or heterodimer and also heterotetramer. Interacts directly with PPP1R12A. Non-covalent dimer of dimer of PRKG1-PRKG1 and PPP1R12A-PPP1R12A. This interaction targets PRKG1 to stress fibers to mediate smooth muscle cell relaxation and vasodilation in responses to rises in cGMP (By similarity). Isoform beta: antiparallel homodimer. Part of cGMP kinase signaling complex at least composed of ACTA2/alpha-actin, CNN1/calponin H1, PLN/phospholamban, PRKG1 and ITPR1 (By similarity). Interacts with IRAG1. Forms a stable complex with ITPR1, IRAG1, and isoform beta of PRKG1 (By similarity). Interacts with TRPC7 (via ankyrin repeat domain) (By similarity). Isoform alpha interacts with RGS2 (By similarity). Interacts with GTF2I (By similarity).</text>
</comment>
<comment type="interaction">
    <interactant intactId="EBI-6991999">
        <id>P0C605</id>
    </interactant>
    <interactant intactId="EBI-527224">
        <id>O35607</id>
        <label>Bmpr2</label>
    </interactant>
    <organismsDiffer>false</organismsDiffer>
    <experiments>4</experiments>
</comment>
<comment type="interaction">
    <interactant intactId="EBI-15699851">
        <id>P0C605-1</id>
    </interactant>
    <interactant intactId="EBI-1014335">
        <id>Q9DBR7</id>
        <label>Ppp1r12a</label>
    </interactant>
    <organismsDiffer>false</organismsDiffer>
    <experiments>2</experiments>
</comment>
<comment type="subcellular location">
    <subcellularLocation>
        <location evidence="1">Cytoplasm</location>
    </subcellularLocation>
    <text evidence="1">Colocalized with TRPC7 in the plasma membrane.</text>
</comment>
<comment type="alternative products">
    <event type="alternative splicing"/>
    <isoform>
        <id>P0C605-1</id>
        <name>Alpha</name>
        <name>CGK1-alpha</name>
        <sequence type="displayed"/>
    </isoform>
    <isoform>
        <id>P0C605-2</id>
        <id>Q9Z0Z0-1</id>
        <name>Beta</name>
        <name>CGK1-beta</name>
        <sequence type="described" ref="VSP_038715"/>
    </isoform>
</comment>
<comment type="tissue specificity">
    <text evidence="10">Detected in cerebellum, hippocampus, dorsomedial hypothalamus, medulla, subcommissural organ, cerebral cortex, amygdala, habenulae, various hypothalamic regions, olfactory bulb, pituitary gland, and retina. Isoform alpha is prominent in the cerebellum and medulla, whereas isoform Beta is predominant in the cortex, hippocampus, hypothalamus, and olfactory bulb.</text>
</comment>
<comment type="domain">
    <text evidence="1">Composed of an N-terminal leucine-zipper domain followed by an autoinhibitory domain, which mediate homodimer formation and inhibit kinase activity, respectively. Next, two cGMP-binding domains are followed by the catalytic domain at the C-terminus. Binding of cGMP to cGMP-binding domains results in a conformational change that activates kinase activity by removing the autoinhibitory domain from the catalytic cleft leaving the catalytic domain free to phosphorylate downstream substrates. Isoforms alpha and beta have identical cGMP-binding and catalytic domains but differ in their leucine zipper and autoinhibitory sequences and therefore differ in their dimerization substrates and kinase enzyme activity (By similarity).</text>
</comment>
<comment type="domain">
    <text evidence="1">Heterotetramerization is mediated by the interaction between a coiled-coil of PRKG1 and the leucine/isoleucine zipper of PPP1R12A/MBS, the myosin-binding subunit of the myosin phosphatase.</text>
</comment>
<comment type="PTM">
    <text evidence="1">Autophosphorylation increases kinase activity.</text>
</comment>
<comment type="PTM">
    <text evidence="1">65 kDa monomer is produced by proteolytic cleavage.</text>
</comment>
<comment type="disruption phenotype">
    <text evidence="8 12">Leads to premature death at approximately 6 weeks of age, presumably due to smooth muscle dysfunction. These mice show multiple defects including impaired smooth muscle relaxation, disturbed gastrointestinal motility and enhanced platelet adhesion.</text>
</comment>
<comment type="similarity">
    <text evidence="16">Belongs to the protein kinase superfamily. AGC Ser/Thr protein kinase family. cGMP subfamily.</text>
</comment>
<name>KGP1_MOUSE</name>
<dbReference type="EC" id="2.7.11.12"/>
<dbReference type="EMBL" id="AF084547">
    <property type="protein sequence ID" value="AAD16044.1"/>
    <property type="molecule type" value="mRNA"/>
</dbReference>
<dbReference type="EMBL" id="AC102751">
    <property type="status" value="NOT_ANNOTATED_CDS"/>
    <property type="molecule type" value="Genomic_DNA"/>
</dbReference>
<dbReference type="EMBL" id="AC103405">
    <property type="status" value="NOT_ANNOTATED_CDS"/>
    <property type="molecule type" value="Genomic_DNA"/>
</dbReference>
<dbReference type="EMBL" id="AC108399">
    <property type="status" value="NOT_ANNOTATED_CDS"/>
    <property type="molecule type" value="Genomic_DNA"/>
</dbReference>
<dbReference type="EMBL" id="AC116507">
    <property type="status" value="NOT_ANNOTATED_CDS"/>
    <property type="molecule type" value="Genomic_DNA"/>
</dbReference>
<dbReference type="EMBL" id="AC119158">
    <property type="status" value="NOT_ANNOTATED_CDS"/>
    <property type="molecule type" value="Genomic_DNA"/>
</dbReference>
<dbReference type="EMBL" id="AC122548">
    <property type="status" value="NOT_ANNOTATED_CDS"/>
    <property type="molecule type" value="Genomic_DNA"/>
</dbReference>
<dbReference type="EMBL" id="BC113162">
    <property type="protein sequence ID" value="AAI13163.1"/>
    <property type="molecule type" value="mRNA"/>
</dbReference>
<dbReference type="CCDS" id="CCDS29745.1">
    <molecule id="P0C605-1"/>
</dbReference>
<dbReference type="CCDS" id="CCDS29746.1">
    <molecule id="P0C605-2"/>
</dbReference>
<dbReference type="RefSeq" id="NP_001013855.1">
    <molecule id="P0C605-1"/>
    <property type="nucleotide sequence ID" value="NM_001013833.3"/>
</dbReference>
<dbReference type="RefSeq" id="NP_001398110.1">
    <molecule id="P0C605-1"/>
    <property type="nucleotide sequence ID" value="NM_001411181.1"/>
</dbReference>
<dbReference type="RefSeq" id="NP_035290.1">
    <molecule id="P0C605-2"/>
    <property type="nucleotide sequence ID" value="NM_011160.3"/>
</dbReference>
<dbReference type="RefSeq" id="XP_006526831.1">
    <property type="nucleotide sequence ID" value="XM_006526768.3"/>
</dbReference>
<dbReference type="BMRB" id="P0C605"/>
<dbReference type="EMDB" id="EMD-25722"/>
<dbReference type="SMR" id="P0C605"/>
<dbReference type="BioGRID" id="202372">
    <property type="interactions" value="9"/>
</dbReference>
<dbReference type="DIP" id="DIP-29981N"/>
<dbReference type="FunCoup" id="P0C605">
    <property type="interactions" value="2557"/>
</dbReference>
<dbReference type="IntAct" id="P0C605">
    <property type="interactions" value="5"/>
</dbReference>
<dbReference type="MINT" id="P0C605"/>
<dbReference type="STRING" id="10090.ENSMUSP00000073268"/>
<dbReference type="GlyGen" id="P0C605">
    <property type="glycosylation" value="1 site, 1 N-linked glycan (1 site)"/>
</dbReference>
<dbReference type="iPTMnet" id="P0C605"/>
<dbReference type="PhosphoSitePlus" id="P0C605"/>
<dbReference type="jPOST" id="P0C605"/>
<dbReference type="PaxDb" id="10090-ENSMUSP00000073268"/>
<dbReference type="PeptideAtlas" id="P0C605"/>
<dbReference type="ProteomicsDB" id="269455">
    <molecule id="P0C605-1"/>
</dbReference>
<dbReference type="ProteomicsDB" id="269456">
    <molecule id="P0C605-2"/>
</dbReference>
<dbReference type="Pumba" id="P0C605"/>
<dbReference type="Antibodypedia" id="2108">
    <property type="antibodies" value="347 antibodies from 38 providers"/>
</dbReference>
<dbReference type="DNASU" id="19091"/>
<dbReference type="Ensembl" id="ENSMUST00000065067.14">
    <molecule id="P0C605-1"/>
    <property type="protein sequence ID" value="ENSMUSP00000067576.6"/>
    <property type="gene ID" value="ENSMUSG00000052920.17"/>
</dbReference>
<dbReference type="Ensembl" id="ENSMUST00000073581.6">
    <molecule id="P0C605-2"/>
    <property type="protein sequence ID" value="ENSMUSP00000073268.5"/>
    <property type="gene ID" value="ENSMUSG00000052920.17"/>
</dbReference>
<dbReference type="GeneID" id="19091"/>
<dbReference type="KEGG" id="mmu:19091"/>
<dbReference type="UCSC" id="uc008heo.2">
    <molecule id="P0C605-2"/>
    <property type="organism name" value="mouse"/>
</dbReference>
<dbReference type="UCSC" id="uc008hep.2">
    <molecule id="P0C605-1"/>
    <property type="organism name" value="mouse"/>
</dbReference>
<dbReference type="AGR" id="MGI:108174"/>
<dbReference type="CTD" id="5592"/>
<dbReference type="MGI" id="MGI:108174">
    <property type="gene designation" value="Prkg1"/>
</dbReference>
<dbReference type="VEuPathDB" id="HostDB:ENSMUSG00000052920"/>
<dbReference type="eggNOG" id="KOG0614">
    <property type="taxonomic scope" value="Eukaryota"/>
</dbReference>
<dbReference type="GeneTree" id="ENSGT00940000154704"/>
<dbReference type="HOGENOM" id="CLU_000288_73_2_1"/>
<dbReference type="InParanoid" id="P0C605"/>
<dbReference type="OMA" id="ESCLADC"/>
<dbReference type="OrthoDB" id="47490at9989"/>
<dbReference type="PhylomeDB" id="P0C605"/>
<dbReference type="TreeFam" id="TF313261"/>
<dbReference type="BRENDA" id="2.7.11.12">
    <property type="organism ID" value="3474"/>
</dbReference>
<dbReference type="Reactome" id="R-MMU-392517">
    <property type="pathway name" value="Rap1 signalling"/>
</dbReference>
<dbReference type="Reactome" id="R-MMU-418457">
    <property type="pathway name" value="cGMP effects"/>
</dbReference>
<dbReference type="BioGRID-ORCS" id="19091">
    <property type="hits" value="0 hits in 81 CRISPR screens"/>
</dbReference>
<dbReference type="ChiTaRS" id="Prkg1">
    <property type="organism name" value="mouse"/>
</dbReference>
<dbReference type="PRO" id="PR:P0C605"/>
<dbReference type="Proteomes" id="UP000000589">
    <property type="component" value="Chromosome 19"/>
</dbReference>
<dbReference type="RNAct" id="P0C605">
    <property type="molecule type" value="protein"/>
</dbReference>
<dbReference type="Bgee" id="ENSMUSG00000052920">
    <property type="expression patterns" value="Expressed in spermatid and 204 other cell types or tissues"/>
</dbReference>
<dbReference type="ExpressionAtlas" id="P0C605">
    <property type="expression patterns" value="baseline and differential"/>
</dbReference>
<dbReference type="GO" id="GO:0001669">
    <property type="term" value="C:acrosomal vesicle"/>
    <property type="evidence" value="ECO:0007669"/>
    <property type="project" value="Ensembl"/>
</dbReference>
<dbReference type="GO" id="GO:0005737">
    <property type="term" value="C:cytoplasm"/>
    <property type="evidence" value="ECO:0000250"/>
    <property type="project" value="UniProtKB"/>
</dbReference>
<dbReference type="GO" id="GO:0005794">
    <property type="term" value="C:Golgi apparatus"/>
    <property type="evidence" value="ECO:0000314"/>
    <property type="project" value="UniProtKB"/>
</dbReference>
<dbReference type="GO" id="GO:0005654">
    <property type="term" value="C:nucleoplasm"/>
    <property type="evidence" value="ECO:0007669"/>
    <property type="project" value="Ensembl"/>
</dbReference>
<dbReference type="GO" id="GO:0005886">
    <property type="term" value="C:plasma membrane"/>
    <property type="evidence" value="ECO:0000314"/>
    <property type="project" value="UniProtKB"/>
</dbReference>
<dbReference type="GO" id="GO:0042383">
    <property type="term" value="C:sarcolemma"/>
    <property type="evidence" value="ECO:0007669"/>
    <property type="project" value="Ensembl"/>
</dbReference>
<dbReference type="GO" id="GO:0005524">
    <property type="term" value="F:ATP binding"/>
    <property type="evidence" value="ECO:0007669"/>
    <property type="project" value="UniProtKB-KW"/>
</dbReference>
<dbReference type="GO" id="GO:0005246">
    <property type="term" value="F:calcium channel regulator activity"/>
    <property type="evidence" value="ECO:0000250"/>
    <property type="project" value="UniProtKB"/>
</dbReference>
<dbReference type="GO" id="GO:0030553">
    <property type="term" value="F:cGMP binding"/>
    <property type="evidence" value="ECO:0000314"/>
    <property type="project" value="UniProtKB"/>
</dbReference>
<dbReference type="GO" id="GO:0004692">
    <property type="term" value="F:cGMP-dependent protein kinase activity"/>
    <property type="evidence" value="ECO:0000314"/>
    <property type="project" value="UniProtKB"/>
</dbReference>
<dbReference type="GO" id="GO:0042802">
    <property type="term" value="F:identical protein binding"/>
    <property type="evidence" value="ECO:0007669"/>
    <property type="project" value="Ensembl"/>
</dbReference>
<dbReference type="GO" id="GO:0048273">
    <property type="term" value="F:mitogen-activated protein kinase p38 binding"/>
    <property type="evidence" value="ECO:0007669"/>
    <property type="project" value="Ensembl"/>
</dbReference>
<dbReference type="GO" id="GO:0004672">
    <property type="term" value="F:protein kinase activity"/>
    <property type="evidence" value="ECO:0000314"/>
    <property type="project" value="UniProtKB"/>
</dbReference>
<dbReference type="GO" id="GO:0106310">
    <property type="term" value="F:protein serine kinase activity"/>
    <property type="evidence" value="ECO:0007669"/>
    <property type="project" value="RHEA"/>
</dbReference>
<dbReference type="GO" id="GO:0004674">
    <property type="term" value="F:protein serine/threonine kinase activity"/>
    <property type="evidence" value="ECO:0000314"/>
    <property type="project" value="MGI"/>
</dbReference>
<dbReference type="GO" id="GO:0061049">
    <property type="term" value="P:cell growth involved in cardiac muscle cell development"/>
    <property type="evidence" value="ECO:0007669"/>
    <property type="project" value="Ensembl"/>
</dbReference>
<dbReference type="GO" id="GO:0021549">
    <property type="term" value="P:cerebellum development"/>
    <property type="evidence" value="ECO:0007669"/>
    <property type="project" value="Ensembl"/>
</dbReference>
<dbReference type="GO" id="GO:0019934">
    <property type="term" value="P:cGMP-mediated signaling"/>
    <property type="evidence" value="ECO:0000315"/>
    <property type="project" value="MGI"/>
</dbReference>
<dbReference type="GO" id="GO:0048668">
    <property type="term" value="P:collateral sprouting"/>
    <property type="evidence" value="ECO:0000315"/>
    <property type="project" value="MGI"/>
</dbReference>
<dbReference type="GO" id="GO:0016358">
    <property type="term" value="P:dendrite development"/>
    <property type="evidence" value="ECO:0000315"/>
    <property type="project" value="MGI"/>
</dbReference>
<dbReference type="GO" id="GO:0030900">
    <property type="term" value="P:forebrain development"/>
    <property type="evidence" value="ECO:0000315"/>
    <property type="project" value="MGI"/>
</dbReference>
<dbReference type="GO" id="GO:0014050">
    <property type="term" value="P:negative regulation of glutamate secretion"/>
    <property type="evidence" value="ECO:0007669"/>
    <property type="project" value="Ensembl"/>
</dbReference>
<dbReference type="GO" id="GO:0010920">
    <property type="term" value="P:negative regulation of inositol phosphate biosynthetic process"/>
    <property type="evidence" value="ECO:0007669"/>
    <property type="project" value="Ensembl"/>
</dbReference>
<dbReference type="GO" id="GO:0090331">
    <property type="term" value="P:negative regulation of platelet aggregation"/>
    <property type="evidence" value="ECO:0000250"/>
    <property type="project" value="UniProtKB"/>
</dbReference>
<dbReference type="GO" id="GO:0045986">
    <property type="term" value="P:negative regulation of smooth muscle contraction"/>
    <property type="evidence" value="ECO:0000315"/>
    <property type="project" value="MGI"/>
</dbReference>
<dbReference type="GO" id="GO:1904753">
    <property type="term" value="P:negative regulation of vascular associated smooth muscle cell migration"/>
    <property type="evidence" value="ECO:0007669"/>
    <property type="project" value="Ensembl"/>
</dbReference>
<dbReference type="GO" id="GO:1904706">
    <property type="term" value="P:negative regulation of vascular associated smooth muscle cell proliferation"/>
    <property type="evidence" value="ECO:0007669"/>
    <property type="project" value="Ensembl"/>
</dbReference>
<dbReference type="GO" id="GO:0001764">
    <property type="term" value="P:neuron migration"/>
    <property type="evidence" value="ECO:0000315"/>
    <property type="project" value="MGI"/>
</dbReference>
<dbReference type="GO" id="GO:0042753">
    <property type="term" value="P:positive regulation of circadian rhythm"/>
    <property type="evidence" value="ECO:0007669"/>
    <property type="project" value="Ensembl"/>
</dbReference>
<dbReference type="GO" id="GO:0007204">
    <property type="term" value="P:positive regulation of cytosolic calcium ion concentration"/>
    <property type="evidence" value="ECO:0007669"/>
    <property type="project" value="Ensembl"/>
</dbReference>
<dbReference type="GO" id="GO:0006468">
    <property type="term" value="P:protein phosphorylation"/>
    <property type="evidence" value="ECO:0000314"/>
    <property type="project" value="UniProtKB"/>
</dbReference>
<dbReference type="GO" id="GO:0043087">
    <property type="term" value="P:regulation of GTPase activity"/>
    <property type="evidence" value="ECO:0000250"/>
    <property type="project" value="UniProtKB"/>
</dbReference>
<dbReference type="GO" id="GO:2000224">
    <property type="term" value="P:regulation of testosterone biosynthetic process"/>
    <property type="evidence" value="ECO:0007669"/>
    <property type="project" value="Ensembl"/>
</dbReference>
<dbReference type="GO" id="GO:0060087">
    <property type="term" value="P:relaxation of vascular associated smooth muscle"/>
    <property type="evidence" value="ECO:0000315"/>
    <property type="project" value="MGI"/>
</dbReference>
<dbReference type="GO" id="GO:0007165">
    <property type="term" value="P:signal transduction"/>
    <property type="evidence" value="ECO:0000314"/>
    <property type="project" value="UniProtKB"/>
</dbReference>
<dbReference type="GO" id="GO:0007286">
    <property type="term" value="P:spermatid development"/>
    <property type="evidence" value="ECO:0007669"/>
    <property type="project" value="Ensembl"/>
</dbReference>
<dbReference type="CDD" id="cd00038">
    <property type="entry name" value="CAP_ED"/>
    <property type="match status" value="2"/>
</dbReference>
<dbReference type="CDD" id="cd12085">
    <property type="entry name" value="DD_cGKI-alpha"/>
    <property type="match status" value="1"/>
</dbReference>
<dbReference type="CDD" id="cd05572">
    <property type="entry name" value="STKc_cGK"/>
    <property type="match status" value="1"/>
</dbReference>
<dbReference type="FunFam" id="3.30.200.20:FF:000005">
    <property type="entry name" value="cAMP-dependent protein kinase catalytic subunit"/>
    <property type="match status" value="1"/>
</dbReference>
<dbReference type="FunFam" id="1.10.510.10:FF:000096">
    <property type="entry name" value="cGMP-dependent protein kinase"/>
    <property type="match status" value="1"/>
</dbReference>
<dbReference type="FunFam" id="2.60.120.10:FF:000035">
    <property type="entry name" value="cGMP-dependent protein kinase"/>
    <property type="match status" value="1"/>
</dbReference>
<dbReference type="FunFam" id="2.60.120.10:FF:000037">
    <property type="entry name" value="cGMP-dependent protein kinase"/>
    <property type="match status" value="1"/>
</dbReference>
<dbReference type="FunFam" id="1.20.5.490:FF:000006">
    <property type="entry name" value="cGMP-dependent protein kinase 1"/>
    <property type="match status" value="1"/>
</dbReference>
<dbReference type="Gene3D" id="2.60.120.10">
    <property type="entry name" value="Jelly Rolls"/>
    <property type="match status" value="2"/>
</dbReference>
<dbReference type="Gene3D" id="3.30.200.20">
    <property type="entry name" value="Phosphorylase Kinase, domain 1"/>
    <property type="match status" value="1"/>
</dbReference>
<dbReference type="Gene3D" id="1.20.5.490">
    <property type="entry name" value="Single helix bin"/>
    <property type="match status" value="1"/>
</dbReference>
<dbReference type="Gene3D" id="1.10.510.10">
    <property type="entry name" value="Transferase(Phosphotransferase) domain 1"/>
    <property type="match status" value="1"/>
</dbReference>
<dbReference type="InterPro" id="IPR000961">
    <property type="entry name" value="AGC-kinase_C"/>
</dbReference>
<dbReference type="InterPro" id="IPR002374">
    <property type="entry name" value="cGMP_dep_kinase"/>
</dbReference>
<dbReference type="InterPro" id="IPR018488">
    <property type="entry name" value="cNMP-bd_CS"/>
</dbReference>
<dbReference type="InterPro" id="IPR000595">
    <property type="entry name" value="cNMP-bd_dom"/>
</dbReference>
<dbReference type="InterPro" id="IPR018490">
    <property type="entry name" value="cNMP-bd_dom_sf"/>
</dbReference>
<dbReference type="InterPro" id="IPR011009">
    <property type="entry name" value="Kinase-like_dom_sf"/>
</dbReference>
<dbReference type="InterPro" id="IPR031831">
    <property type="entry name" value="PKcGMP_CC"/>
</dbReference>
<dbReference type="InterPro" id="IPR000719">
    <property type="entry name" value="Prot_kinase_dom"/>
</dbReference>
<dbReference type="InterPro" id="IPR017441">
    <property type="entry name" value="Protein_kinase_ATP_BS"/>
</dbReference>
<dbReference type="InterPro" id="IPR014710">
    <property type="entry name" value="RmlC-like_jellyroll"/>
</dbReference>
<dbReference type="InterPro" id="IPR008271">
    <property type="entry name" value="Ser/Thr_kinase_AS"/>
</dbReference>
<dbReference type="InterPro" id="IPR035014">
    <property type="entry name" value="STKc_cGK"/>
</dbReference>
<dbReference type="PANTHER" id="PTHR24353:SF68">
    <property type="match status" value="1"/>
</dbReference>
<dbReference type="PANTHER" id="PTHR24353">
    <property type="entry name" value="CYCLIC NUCLEOTIDE-DEPENDENT PROTEIN KINASE"/>
    <property type="match status" value="1"/>
</dbReference>
<dbReference type="Pfam" id="PF00027">
    <property type="entry name" value="cNMP_binding"/>
    <property type="match status" value="2"/>
</dbReference>
<dbReference type="Pfam" id="PF16808">
    <property type="entry name" value="PKcGMP_CC"/>
    <property type="match status" value="1"/>
</dbReference>
<dbReference type="Pfam" id="PF00069">
    <property type="entry name" value="Pkinase"/>
    <property type="match status" value="1"/>
</dbReference>
<dbReference type="PIRSF" id="PIRSF000559">
    <property type="entry name" value="cGMP-dep_kinase"/>
    <property type="match status" value="1"/>
</dbReference>
<dbReference type="PRINTS" id="PR00104">
    <property type="entry name" value="CGMPKINASE"/>
</dbReference>
<dbReference type="SMART" id="SM00100">
    <property type="entry name" value="cNMP"/>
    <property type="match status" value="2"/>
</dbReference>
<dbReference type="SMART" id="SM00133">
    <property type="entry name" value="S_TK_X"/>
    <property type="match status" value="1"/>
</dbReference>
<dbReference type="SMART" id="SM00220">
    <property type="entry name" value="S_TKc"/>
    <property type="match status" value="1"/>
</dbReference>
<dbReference type="SUPFAM" id="SSF51206">
    <property type="entry name" value="cAMP-binding domain-like"/>
    <property type="match status" value="2"/>
</dbReference>
<dbReference type="SUPFAM" id="SSF56112">
    <property type="entry name" value="Protein kinase-like (PK-like)"/>
    <property type="match status" value="1"/>
</dbReference>
<dbReference type="PROSITE" id="PS51285">
    <property type="entry name" value="AGC_KINASE_CTER"/>
    <property type="match status" value="1"/>
</dbReference>
<dbReference type="PROSITE" id="PS00888">
    <property type="entry name" value="CNMP_BINDING_1"/>
    <property type="match status" value="2"/>
</dbReference>
<dbReference type="PROSITE" id="PS00889">
    <property type="entry name" value="CNMP_BINDING_2"/>
    <property type="match status" value="2"/>
</dbReference>
<dbReference type="PROSITE" id="PS50042">
    <property type="entry name" value="CNMP_BINDING_3"/>
    <property type="match status" value="2"/>
</dbReference>
<dbReference type="PROSITE" id="PS00107">
    <property type="entry name" value="PROTEIN_KINASE_ATP"/>
    <property type="match status" value="1"/>
</dbReference>
<dbReference type="PROSITE" id="PS50011">
    <property type="entry name" value="PROTEIN_KINASE_DOM"/>
    <property type="match status" value="1"/>
</dbReference>
<dbReference type="PROSITE" id="PS00108">
    <property type="entry name" value="PROTEIN_KINASE_ST"/>
    <property type="match status" value="1"/>
</dbReference>
<gene>
    <name type="primary">Prkg1</name>
    <name type="synonym">Prkg1b</name>
    <name type="synonym">Prkgr1a</name>
    <name type="synonym">Prkgr1b</name>
</gene>
<protein>
    <recommendedName>
        <fullName>cGMP-dependent protein kinase 1</fullName>
        <shortName>cGK 1</shortName>
        <shortName>cGK1</shortName>
        <ecNumber>2.7.11.12</ecNumber>
    </recommendedName>
    <alternativeName>
        <fullName>cGMP-dependent protein kinase I</fullName>
        <shortName>cGKI</shortName>
    </alternativeName>
</protein>
<feature type="initiator methionine" description="Removed" evidence="2">
    <location>
        <position position="1"/>
    </location>
</feature>
<feature type="chain" id="PRO_0000314022" description="cGMP-dependent protein kinase 1">
    <location>
        <begin position="2"/>
        <end position="671"/>
    </location>
</feature>
<feature type="domain" description="Protein kinase" evidence="4">
    <location>
        <begin position="360"/>
        <end position="619"/>
    </location>
</feature>
<feature type="domain" description="AGC-kinase C-terminal" evidence="5">
    <location>
        <begin position="620"/>
        <end position="671"/>
    </location>
</feature>
<feature type="region of interest" description="Required for dimerization" evidence="1">
    <location>
        <begin position="2"/>
        <end position="102"/>
    </location>
</feature>
<feature type="region of interest" description="Leucine-zipper">
    <location>
        <begin position="9"/>
        <end position="44"/>
    </location>
</feature>
<feature type="region of interest" description="Autoinhibitory domain" evidence="1">
    <location>
        <begin position="50"/>
        <end position="75"/>
    </location>
</feature>
<feature type="region of interest" description="cGMP-binding, high affinity" evidence="1">
    <location>
        <begin position="103"/>
        <end position="220"/>
    </location>
</feature>
<feature type="region of interest" description="cGMP-binding, low affinity" evidence="1">
    <location>
        <begin position="221"/>
        <end position="341"/>
    </location>
</feature>
<feature type="region of interest" description="Disordered" evidence="7">
    <location>
        <begin position="635"/>
        <end position="671"/>
    </location>
</feature>
<feature type="coiled-coil region" evidence="1">
    <location>
        <begin position="2"/>
        <end position="59"/>
    </location>
</feature>
<feature type="compositionally biased region" description="Acidic residues" evidence="7">
    <location>
        <begin position="652"/>
        <end position="661"/>
    </location>
</feature>
<feature type="active site" description="Proton acceptor" evidence="4 6">
    <location>
        <position position="484"/>
    </location>
</feature>
<feature type="binding site" evidence="3">
    <location>
        <begin position="167"/>
        <end position="170"/>
    </location>
    <ligand>
        <name>3',5'-cyclic GMP</name>
        <dbReference type="ChEBI" id="CHEBI:57746"/>
        <label>1</label>
    </ligand>
</feature>
<feature type="binding site" evidence="3">
    <location>
        <begin position="177"/>
        <end position="178"/>
    </location>
    <ligand>
        <name>3',5'-cyclic GMP</name>
        <dbReference type="ChEBI" id="CHEBI:57746"/>
        <label>1</label>
    </ligand>
</feature>
<feature type="binding site" evidence="3">
    <location>
        <position position="282"/>
    </location>
    <ligand>
        <name>3',5'-cyclic GMP</name>
        <dbReference type="ChEBI" id="CHEBI:57746"/>
        <label>2</label>
    </ligand>
</feature>
<feature type="binding site" evidence="3">
    <location>
        <begin position="291"/>
        <end position="294"/>
    </location>
    <ligand>
        <name>3',5'-cyclic GMP</name>
        <dbReference type="ChEBI" id="CHEBI:57746"/>
        <label>2</label>
    </ligand>
</feature>
<feature type="binding site" evidence="3">
    <location>
        <begin position="301"/>
        <end position="302"/>
    </location>
    <ligand>
        <name>3',5'-cyclic GMP</name>
        <dbReference type="ChEBI" id="CHEBI:57746"/>
        <label>2</label>
    </ligand>
</feature>
<feature type="binding site" evidence="3">
    <location>
        <position position="336"/>
    </location>
    <ligand>
        <name>3',5'-cyclic GMP</name>
        <dbReference type="ChEBI" id="CHEBI:57746"/>
        <label>2</label>
    </ligand>
</feature>
<feature type="binding site" evidence="4">
    <location>
        <begin position="366"/>
        <end position="374"/>
    </location>
    <ligand>
        <name>ATP</name>
        <dbReference type="ChEBI" id="CHEBI:30616"/>
    </ligand>
</feature>
<feature type="binding site" evidence="4">
    <location>
        <position position="390"/>
    </location>
    <ligand>
        <name>ATP</name>
        <dbReference type="ChEBI" id="CHEBI:30616"/>
    </ligand>
</feature>
<feature type="modified residue" description="N-acetylserine" evidence="2">
    <location>
        <position position="2"/>
    </location>
</feature>
<feature type="modified residue" description="Phosphothreonine; by autocatalysis" evidence="2">
    <location>
        <position position="59"/>
    </location>
</feature>
<feature type="modified residue" description="Phosphothreonine" evidence="17">
    <location>
        <position position="515"/>
    </location>
</feature>
<feature type="disulfide bond" description="Interchain" evidence="1">
    <location>
        <position position="43"/>
    </location>
</feature>
<feature type="splice variant" id="VSP_038715" description="In isoform Beta." evidence="14 15">
    <original>MSELEEDFAKILMLKEERIKELEKRLSEKEEEIQELKRKLHKCQSVLPVPSTHIGPRTTRAQGISAEPQTYRSFHDLRQAFRKFTKSER</original>
    <variation>MGTLRDLQYALQEKIEELRQRDALIDELELELDQKDELIQKLQNELDKYRSVIRPATQQAQKQSASTLQGEPRTKRQAISAEPTAFDIQDLSHVTLPFYPKSPQ</variation>
    <location>
        <begin position="1"/>
        <end position="89"/>
    </location>
</feature>
<organism>
    <name type="scientific">Mus musculus</name>
    <name type="common">Mouse</name>
    <dbReference type="NCBI Taxonomy" id="10090"/>
    <lineage>
        <taxon>Eukaryota</taxon>
        <taxon>Metazoa</taxon>
        <taxon>Chordata</taxon>
        <taxon>Craniata</taxon>
        <taxon>Vertebrata</taxon>
        <taxon>Euteleostomi</taxon>
        <taxon>Mammalia</taxon>
        <taxon>Eutheria</taxon>
        <taxon>Euarchontoglires</taxon>
        <taxon>Glires</taxon>
        <taxon>Rodentia</taxon>
        <taxon>Myomorpha</taxon>
        <taxon>Muroidea</taxon>
        <taxon>Muridae</taxon>
        <taxon>Murinae</taxon>
        <taxon>Mus</taxon>
        <taxon>Mus</taxon>
    </lineage>
</organism>
<reference key="1">
    <citation type="journal article" date="1999" name="J. Biol. Chem.">
        <title>Cyclic AMP- and cyclic GMP-dependent protein kinases differ in their regulation of cyclic AMP response element-dependent gene transcription.</title>
        <authorList>
            <person name="Collins S.P."/>
            <person name="Uhler M.D."/>
        </authorList>
    </citation>
    <scope>NUCLEOTIDE SEQUENCE [MRNA] (ISOFORM BETA)</scope>
    <source>
        <strain>C57BL/6J</strain>
        <tissue>Brain</tissue>
    </source>
</reference>
<reference key="2">
    <citation type="journal article" date="2009" name="PLoS Biol.">
        <title>Lineage-specific biology revealed by a finished genome assembly of the mouse.</title>
        <authorList>
            <person name="Church D.M."/>
            <person name="Goodstadt L."/>
            <person name="Hillier L.W."/>
            <person name="Zody M.C."/>
            <person name="Goldstein S."/>
            <person name="She X."/>
            <person name="Bult C.J."/>
            <person name="Agarwala R."/>
            <person name="Cherry J.L."/>
            <person name="DiCuccio M."/>
            <person name="Hlavina W."/>
            <person name="Kapustin Y."/>
            <person name="Meric P."/>
            <person name="Maglott D."/>
            <person name="Birtle Z."/>
            <person name="Marques A.C."/>
            <person name="Graves T."/>
            <person name="Zhou S."/>
            <person name="Teague B."/>
            <person name="Potamousis K."/>
            <person name="Churas C."/>
            <person name="Place M."/>
            <person name="Herschleb J."/>
            <person name="Runnheim R."/>
            <person name="Forrest D."/>
            <person name="Amos-Landgraf J."/>
            <person name="Schwartz D.C."/>
            <person name="Cheng Z."/>
            <person name="Lindblad-Toh K."/>
            <person name="Eichler E.E."/>
            <person name="Ponting C.P."/>
        </authorList>
    </citation>
    <scope>NUCLEOTIDE SEQUENCE [LARGE SCALE GENOMIC DNA]</scope>
    <source>
        <strain>C57BL/6J</strain>
    </source>
</reference>
<reference key="3">
    <citation type="journal article" date="2004" name="Genome Res.">
        <title>The status, quality, and expansion of the NIH full-length cDNA project: the Mammalian Gene Collection (MGC).</title>
        <authorList>
            <consortium name="The MGC Project Team"/>
        </authorList>
    </citation>
    <scope>NUCLEOTIDE SEQUENCE [LARGE SCALE MRNA] (ISOFORM BETA)</scope>
</reference>
<reference key="4">
    <citation type="journal article" date="1998" name="EMBO J.">
        <title>Defective smooth muscle regulation in cGMP kinase I-deficient mice.</title>
        <authorList>
            <person name="Pfeifer A."/>
            <person name="Klatt P."/>
            <person name="Massberg S."/>
            <person name="Ny L."/>
            <person name="Sausbier M."/>
            <person name="Hirneiss C."/>
            <person name="Wang G.X."/>
            <person name="Korth M."/>
            <person name="Aszodi A."/>
            <person name="Andersson K.E."/>
            <person name="Krombach F."/>
            <person name="Mayerhofer A."/>
            <person name="Ruth P."/>
            <person name="Fassler R."/>
            <person name="Hofmann F."/>
        </authorList>
    </citation>
    <scope>DISRUPTION PHENOTYPE</scope>
    <scope>FUNCTION</scope>
</reference>
<reference key="5">
    <citation type="journal article" date="1999" name="J. Biol. Chem.">
        <title>Phosphorylation-dependent inhibition of protein phosphatase-1 by G-substrate: a Purkinje cell substrate of the cyclic GMP-dependent protein kinase.</title>
        <authorList>
            <person name="Hall K.U."/>
            <person name="Collins S.P."/>
            <person name="Gamm D.M."/>
            <person name="Massa E."/>
            <person name="Depaoli-Roach A.A."/>
            <person name="Uhler M.D."/>
        </authorList>
    </citation>
    <scope>FUNCTION IN PHOSPHORYLATION OF PPP1R17</scope>
    <source>
        <tissue>Brain</tissue>
    </source>
</reference>
<reference key="6">
    <citation type="journal article" date="1999" name="J. Exp. Med.">
        <title>Increased adhesion and aggregation of platelets lacking cyclic guanosine 3',5'-monophosphate kinase I.</title>
        <authorList>
            <person name="Massberg S."/>
            <person name="Sausbier M."/>
            <person name="Klatt P."/>
            <person name="Bauer M."/>
            <person name="Pfeifer A."/>
            <person name="Siess W."/>
            <person name="Fassler R."/>
            <person name="Ruth P."/>
            <person name="Krombach F."/>
            <person name="Hofmann F."/>
        </authorList>
    </citation>
    <scope>DISRUPTION PHENOTYPE</scope>
    <scope>FUNCTION</scope>
</reference>
<reference key="7">
    <citation type="journal article" date="2000" name="Circ. Res.">
        <title>Mechanisms of NO/cGMP-dependent vasorelaxation.</title>
        <authorList>
            <person name="Sausbier M."/>
            <person name="Schubert R."/>
            <person name="Voigt V."/>
            <person name="Hirneiss C."/>
            <person name="Pfeifer A."/>
            <person name="Korth M."/>
            <person name="Kleppisch T."/>
            <person name="Ruth P."/>
            <person name="Hofmann F."/>
        </authorList>
    </citation>
    <scope>FUNCTION IN THE REGULATION OF VASCULAR TONE</scope>
</reference>
<reference key="8">
    <citation type="journal article" date="2005" name="Neuroscience">
        <title>Distribution of cGMP-dependent protein kinase type I and its isoforms in the mouse brain and retina.</title>
        <authorList>
            <person name="Feil S."/>
            <person name="Zimmermann P."/>
            <person name="Knorn A."/>
            <person name="Brummer S."/>
            <person name="Schlossmann J."/>
            <person name="Hofmann F."/>
            <person name="Feil R."/>
        </authorList>
    </citation>
    <scope>TISSUE SPECIFICITY</scope>
</reference>
<reference key="9">
    <citation type="journal article" date="2007" name="Blood">
        <title>IRAG mediates NO/cGMP-dependent inhibition of platelet aggregation and thrombus formation.</title>
        <authorList>
            <person name="Antl M."/>
            <person name="von Bruehl M.-L."/>
            <person name="Eiglsperger C."/>
            <person name="Werner M."/>
            <person name="Konrad I."/>
            <person name="Kocher T."/>
            <person name="Wilm M."/>
            <person name="Hofmann F."/>
            <person name="Massberg S."/>
            <person name="Schlossmann J."/>
        </authorList>
    </citation>
    <scope>INTERACTION WITH IRAG1</scope>
</reference>
<reference key="10">
    <citation type="journal article" date="2009" name="PLoS ONE">
        <title>cGMP-dependent protein kinase type I is implicated in the regulation of the timing and quality of sleep and wakefulness.</title>
        <authorList>
            <person name="Langmesser S."/>
            <person name="Franken P."/>
            <person name="Feil S."/>
            <person name="Emmenegger Y."/>
            <person name="Albrecht U."/>
            <person name="Feil R."/>
        </authorList>
    </citation>
    <scope>FUNCTION</scope>
</reference>
<reference key="11">
    <citation type="journal article" date="2010" name="Cell">
        <title>A tissue-specific atlas of mouse protein phosphorylation and expression.</title>
        <authorList>
            <person name="Huttlin E.L."/>
            <person name="Jedrychowski M.P."/>
            <person name="Elias J.E."/>
            <person name="Goswami T."/>
            <person name="Rad R."/>
            <person name="Beausoleil S.A."/>
            <person name="Villen J."/>
            <person name="Haas W."/>
            <person name="Sowa M.E."/>
            <person name="Gygi S.P."/>
        </authorList>
    </citation>
    <scope>PHOSPHORYLATION [LARGE SCALE ANALYSIS] AT THR-515</scope>
    <scope>IDENTIFICATION BY MASS SPECTROMETRY [LARGE SCALE ANALYSIS]</scope>
    <source>
        <tissue>Brain</tissue>
        <tissue>Brown adipose tissue</tissue>
        <tissue>Heart</tissue>
        <tissue>Kidney</tissue>
        <tissue>Liver</tissue>
        <tissue>Lung</tissue>
        <tissue>Spleen</tissue>
        <tissue>Testis</tissue>
    </source>
</reference>
<keyword id="KW-0007">Acetylation</keyword>
<keyword id="KW-0021">Allosteric enzyme</keyword>
<keyword id="KW-0025">Alternative splicing</keyword>
<keyword id="KW-0067">ATP-binding</keyword>
<keyword id="KW-0140">cGMP</keyword>
<keyword id="KW-0142">cGMP-binding</keyword>
<keyword id="KW-0175">Coiled coil</keyword>
<keyword id="KW-0963">Cytoplasm</keyword>
<keyword id="KW-1015">Disulfide bond</keyword>
<keyword id="KW-0418">Kinase</keyword>
<keyword id="KW-0547">Nucleotide-binding</keyword>
<keyword id="KW-0597">Phosphoprotein</keyword>
<keyword id="KW-1185">Reference proteome</keyword>
<keyword id="KW-0723">Serine/threonine-protein kinase</keyword>
<keyword id="KW-0808">Transferase</keyword>